<gene>
    <name type="primary">mrcA</name>
    <name type="synonym">ponA</name>
    <name type="ordered locus">PA5045</name>
</gene>
<reference key="1">
    <citation type="submission" date="1996-10" db="EMBL/GenBank/DDBJ databases">
        <authorList>
            <person name="Handfield J."/>
            <person name="Gagnon L."/>
            <person name="Dargis M."/>
            <person name="Huletsky A."/>
        </authorList>
    </citation>
    <scope>NUCLEOTIDE SEQUENCE [GENOMIC DNA]</scope>
    <source>
        <strain>ATCC 15692 / DSM 22644 / CIP 104116 / JCM 14847 / LMG 12228 / 1C / PRS 101 / PAO1</strain>
    </source>
</reference>
<reference key="2">
    <citation type="journal article" date="2000" name="Nature">
        <title>Complete genome sequence of Pseudomonas aeruginosa PAO1, an opportunistic pathogen.</title>
        <authorList>
            <person name="Stover C.K."/>
            <person name="Pham X.-Q.T."/>
            <person name="Erwin A.L."/>
            <person name="Mizoguchi S.D."/>
            <person name="Warrener P."/>
            <person name="Hickey M.J."/>
            <person name="Brinkman F.S.L."/>
            <person name="Hufnagle W.O."/>
            <person name="Kowalik D.J."/>
            <person name="Lagrou M."/>
            <person name="Garber R.L."/>
            <person name="Goltry L."/>
            <person name="Tolentino E."/>
            <person name="Westbrock-Wadman S."/>
            <person name="Yuan Y."/>
            <person name="Brody L.L."/>
            <person name="Coulter S.N."/>
            <person name="Folger K.R."/>
            <person name="Kas A."/>
            <person name="Larbig K."/>
            <person name="Lim R.M."/>
            <person name="Smith K.A."/>
            <person name="Spencer D.H."/>
            <person name="Wong G.K.-S."/>
            <person name="Wu Z."/>
            <person name="Paulsen I.T."/>
            <person name="Reizer J."/>
            <person name="Saier M.H. Jr."/>
            <person name="Hancock R.E.W."/>
            <person name="Lory S."/>
            <person name="Olson M.V."/>
        </authorList>
    </citation>
    <scope>NUCLEOTIDE SEQUENCE [LARGE SCALE GENOMIC DNA]</scope>
    <source>
        <strain>ATCC 15692 / DSM 22644 / CIP 104116 / JCM 14847 / LMG 12228 / 1C / PRS 101 / PAO1</strain>
    </source>
</reference>
<reference key="3">
    <citation type="journal article" date="1993" name="Mol. Microbiol.">
        <title>Characterization of pilQ, a new gene required for the biogenesis of type 4 fimbriae in Pseudomonas aeruginosa.</title>
        <authorList>
            <person name="Martin P.R."/>
            <person name="Hobbs M."/>
            <person name="Free P.D."/>
            <person name="Jeske Y."/>
            <person name="Mattick J.S."/>
        </authorList>
    </citation>
    <scope>NUCLEOTIDE SEQUENCE [GENOMIC DNA] OF 1-167</scope>
    <source>
        <strain>ATCC 15692 / DSM 22644 / CIP 104116 / JCM 14847 / LMG 12228 / 1C / PRS 101 / PAO1</strain>
    </source>
</reference>
<protein>
    <recommendedName>
        <fullName>Penicillin-binding protein 1A</fullName>
        <shortName>PBP-1a</shortName>
        <shortName>PBP1a</shortName>
    </recommendedName>
    <domain>
        <recommendedName>
            <fullName>Penicillin-insensitive transglycosylase</fullName>
            <ecNumber evidence="2">2.4.99.28</ecNumber>
        </recommendedName>
        <alternativeName>
            <fullName>Peptidoglycan TGase</fullName>
        </alternativeName>
    </domain>
    <domain>
        <recommendedName>
            <fullName>Penicillin-sensitive transpeptidase</fullName>
            <ecNumber evidence="2">3.4.16.4</ecNumber>
        </recommendedName>
        <alternativeName>
            <fullName>DD-transpeptidase</fullName>
        </alternativeName>
    </domain>
</protein>
<comment type="function">
    <text evidence="1">Cell wall formation. Synthesis of cross-linked peptidoglycan from the lipid intermediates. The enzyme has a penicillin-insensitive transglycosylase N-terminal domain (formation of linear glycan strands) and a penicillin-sensitive transpeptidase C-terminal domain (cross-linking of the peptide subunits).</text>
</comment>
<comment type="catalytic activity">
    <reaction evidence="2">
        <text>[GlcNAc-(1-&gt;4)-Mur2Ac(oyl-L-Ala-gamma-D-Glu-L-Lys-D-Ala-D-Ala)](n)-di-trans,octa-cis-undecaprenyl diphosphate + beta-D-GlcNAc-(1-&gt;4)-Mur2Ac(oyl-L-Ala-gamma-D-Glu-L-Lys-D-Ala-D-Ala)-di-trans,octa-cis-undecaprenyl diphosphate = [GlcNAc-(1-&gt;4)-Mur2Ac(oyl-L-Ala-gamma-D-Glu-L-Lys-D-Ala-D-Ala)](n+1)-di-trans,octa-cis-undecaprenyl diphosphate + di-trans,octa-cis-undecaprenyl diphosphate + H(+)</text>
        <dbReference type="Rhea" id="RHEA:23708"/>
        <dbReference type="Rhea" id="RHEA-COMP:9602"/>
        <dbReference type="Rhea" id="RHEA-COMP:9603"/>
        <dbReference type="ChEBI" id="CHEBI:15378"/>
        <dbReference type="ChEBI" id="CHEBI:58405"/>
        <dbReference type="ChEBI" id="CHEBI:60033"/>
        <dbReference type="ChEBI" id="CHEBI:78435"/>
        <dbReference type="EC" id="2.4.99.28"/>
    </reaction>
</comment>
<comment type="catalytic activity">
    <reaction evidence="2">
        <text>Preferential cleavage: (Ac)2-L-Lys-D-Ala-|-D-Ala. Also transpeptidation of peptidyl-alanyl moieties that are N-acyl substituents of D-alanine.</text>
        <dbReference type="EC" id="3.4.16.4"/>
    </reaction>
</comment>
<comment type="pathway">
    <text>Cell wall biogenesis; peptidoglycan biosynthesis.</text>
</comment>
<comment type="subcellular location">
    <subcellularLocation>
        <location evidence="1">Cell inner membrane</location>
        <topology evidence="1">Single-pass type II membrane protein</topology>
    </subcellularLocation>
</comment>
<comment type="similarity">
    <text evidence="6">In the N-terminal section; belongs to the glycosyltransferase 51 family.</text>
</comment>
<comment type="similarity">
    <text evidence="6">In the C-terminal section; belongs to the transpeptidase family.</text>
</comment>
<sequence length="822" mass="91200">MRLLKFLWWTCVTLICGVLLSFSGAYLYLSPSLPSVEALRNVQLQIPLKVYSEDGKLISEFGEMRRTPIRFADIPQDFIHALLSAEDDNFANHYGVDVKSLMRAAAQLLKSGHIQTGGSTITMQVAKNYFLTNERSFSRKINEILLALQIERQLTKDEILELYVNKIYLGNRAYGIEAAAQVYYGKPIKDLSLAEMAMIAGLPKAPSRYNPLVNPTRSTERRNWILERMLKLGFIDQQRYQAAVEEPINASYHVQTPELNAPYIAEMARAEMVGRYGSEAYTEGYKVITTVRSDLQNAASQSVRDGLIDYDQRHGYRGPETRLPGQTRDAWLKHLGQQRSIGGLEPAIVTQVEKSGIMVMTRDGKEEAVTWDSMKWARPFLSNNSMGPMPRQPADVAQAGDQIRVQRQEDGTLRFVQIPAAQSALISLDPKDGAIRSLVGGFSFEQSNYNRAIQAKRQPGSSFKPFIYSAALDNGFTAASLVNDAPIVFVDEYLDKVWRPKNDTNTFLGPIPLREALYKSRNMVSIRVLQGLGIERAISYITKFGFQRDELPRNFSLALGTATVTPMEIAGAWSVFANGGYKVNPYVIERIESRDGQVLYQANPPRVPVEEQVAADAEDAGNPGDPEHPESAEGEGSIEAQQVAAKAQTTFEPTPAERIIDARTAYIMTSMLQDVIKRGTGRRALALKRTDLAGKTGTTNDSKDGWFSGYNSDYVTSVWVGFDQPETLGRREYGGTVALPIWIRYMGFALKDKPMHTMAEPPGIVSLRIDPVTGRSAAPGTPGAYFEMFKNEDTPPSVNELPPGSFPGSPLPDDEGAPIDLF</sequence>
<feature type="chain" id="PRO_0000083173" description="Penicillin-binding protein 1A">
    <location>
        <begin position="1"/>
        <end position="822"/>
    </location>
</feature>
<feature type="topological domain" description="Cytoplasmic" evidence="4">
    <location>
        <begin position="1"/>
        <end position="5"/>
    </location>
</feature>
<feature type="transmembrane region" description="Helical; Signal-anchor for type II membrane protein" evidence="4">
    <location>
        <begin position="6"/>
        <end position="26"/>
    </location>
</feature>
<feature type="topological domain" description="Periplasmic" evidence="4">
    <location>
        <begin position="27"/>
        <end position="822"/>
    </location>
</feature>
<feature type="region of interest" description="Transglycosylase">
    <location>
        <begin position="48"/>
        <end position="216"/>
    </location>
</feature>
<feature type="region of interest" description="Transpeptidase">
    <location>
        <begin position="403"/>
        <end position="744"/>
    </location>
</feature>
<feature type="region of interest" description="Disordered" evidence="5">
    <location>
        <begin position="614"/>
        <end position="654"/>
    </location>
</feature>
<feature type="region of interest" description="Disordered" evidence="5">
    <location>
        <begin position="790"/>
        <end position="822"/>
    </location>
</feature>
<feature type="compositionally biased region" description="Acidic residues" evidence="5">
    <location>
        <begin position="812"/>
        <end position="822"/>
    </location>
</feature>
<feature type="active site" description="Proton donor; for transglycosylase activity" evidence="3">
    <location>
        <position position="86"/>
    </location>
</feature>
<feature type="active site" description="Acyl-ester intermediate; for transpeptidase activity" evidence="3">
    <location>
        <position position="461"/>
    </location>
</feature>
<feature type="strand" evidence="7">
    <location>
        <begin position="48"/>
        <end position="51"/>
    </location>
</feature>
<feature type="strand" evidence="7">
    <location>
        <begin position="57"/>
        <end position="61"/>
    </location>
</feature>
<feature type="helix" evidence="7">
    <location>
        <begin position="262"/>
        <end position="276"/>
    </location>
</feature>
<feature type="helix" evidence="7">
    <location>
        <begin position="279"/>
        <end position="282"/>
    </location>
</feature>
<feature type="strand" evidence="7">
    <location>
        <begin position="286"/>
        <end position="290"/>
    </location>
</feature>
<feature type="helix" evidence="7">
    <location>
        <begin position="293"/>
        <end position="312"/>
    </location>
</feature>
<feature type="strand" evidence="7">
    <location>
        <begin position="320"/>
        <end position="322"/>
    </location>
</feature>
<feature type="helix" evidence="7">
    <location>
        <begin position="328"/>
        <end position="336"/>
    </location>
</feature>
<feature type="strand" evidence="7">
    <location>
        <begin position="344"/>
        <end position="352"/>
    </location>
</feature>
<feature type="strand" evidence="7">
    <location>
        <begin position="354"/>
        <end position="360"/>
    </location>
</feature>
<feature type="strand" evidence="7">
    <location>
        <begin position="366"/>
        <end position="370"/>
    </location>
</feature>
<feature type="helix" evidence="7">
    <location>
        <begin position="371"/>
        <end position="374"/>
    </location>
</feature>
<feature type="strand" evidence="7">
    <location>
        <begin position="382"/>
        <end position="384"/>
    </location>
</feature>
<feature type="helix" evidence="7">
    <location>
        <begin position="393"/>
        <end position="396"/>
    </location>
</feature>
<feature type="strand" evidence="7">
    <location>
        <begin position="401"/>
        <end position="407"/>
    </location>
</feature>
<feature type="strand" evidence="7">
    <location>
        <begin position="413"/>
        <end position="416"/>
    </location>
</feature>
<feature type="strand" evidence="7">
    <location>
        <begin position="420"/>
        <end position="428"/>
    </location>
</feature>
<feature type="turn" evidence="7">
    <location>
        <begin position="430"/>
        <end position="432"/>
    </location>
</feature>
<feature type="strand" evidence="7">
    <location>
        <begin position="434"/>
        <end position="439"/>
    </location>
</feature>
<feature type="turn" evidence="7">
    <location>
        <begin position="444"/>
        <end position="446"/>
    </location>
</feature>
<feature type="turn" evidence="7">
    <location>
        <begin position="451"/>
        <end position="453"/>
    </location>
</feature>
<feature type="helix" evidence="7">
    <location>
        <begin position="460"/>
        <end position="463"/>
    </location>
</feature>
<feature type="helix" evidence="7">
    <location>
        <begin position="464"/>
        <end position="472"/>
    </location>
</feature>
<feature type="turn" evidence="7">
    <location>
        <begin position="473"/>
        <end position="475"/>
    </location>
</feature>
<feature type="strand" evidence="7">
    <location>
        <begin position="481"/>
        <end position="485"/>
    </location>
</feature>
<feature type="strand" evidence="7">
    <location>
        <begin position="508"/>
        <end position="512"/>
    </location>
</feature>
<feature type="helix" evidence="7">
    <location>
        <begin position="513"/>
        <end position="518"/>
    </location>
</feature>
<feature type="helix" evidence="7">
    <location>
        <begin position="522"/>
        <end position="532"/>
    </location>
</feature>
<feature type="helix" evidence="7">
    <location>
        <begin position="534"/>
        <end position="542"/>
    </location>
</feature>
<feature type="turn" evidence="7">
    <location>
        <begin position="543"/>
        <end position="545"/>
    </location>
</feature>
<feature type="helix" evidence="7">
    <location>
        <begin position="548"/>
        <end position="550"/>
    </location>
</feature>
<feature type="helix" evidence="7">
    <location>
        <begin position="555"/>
        <end position="559"/>
    </location>
</feature>
<feature type="helix" evidence="7">
    <location>
        <begin position="566"/>
        <end position="577"/>
    </location>
</feature>
<feature type="strand" evidence="7">
    <location>
        <begin position="588"/>
        <end position="592"/>
    </location>
</feature>
<feature type="strand" evidence="7">
    <location>
        <begin position="594"/>
        <end position="596"/>
    </location>
</feature>
<feature type="strand" evidence="7">
    <location>
        <begin position="598"/>
        <end position="601"/>
    </location>
</feature>
<feature type="helix" evidence="7">
    <location>
        <begin position="662"/>
        <end position="677"/>
    </location>
</feature>
<feature type="helix" evidence="7">
    <location>
        <begin position="682"/>
        <end position="687"/>
    </location>
</feature>
<feature type="strand" evidence="7">
    <location>
        <begin position="693"/>
        <end position="698"/>
    </location>
</feature>
<feature type="helix" evidence="7">
    <location>
        <begin position="700"/>
        <end position="702"/>
    </location>
</feature>
<feature type="strand" evidence="7">
    <location>
        <begin position="704"/>
        <end position="710"/>
    </location>
</feature>
<feature type="strand" evidence="7">
    <location>
        <begin position="715"/>
        <end position="721"/>
    </location>
</feature>
<feature type="helix" evidence="7">
    <location>
        <begin position="734"/>
        <end position="749"/>
    </location>
</feature>
<feature type="strand" evidence="7">
    <location>
        <begin position="764"/>
        <end position="769"/>
    </location>
</feature>
<feature type="turn" evidence="7">
    <location>
        <begin position="771"/>
        <end position="773"/>
    </location>
</feature>
<feature type="strand" evidence="7">
    <location>
        <begin position="774"/>
        <end position="776"/>
    </location>
</feature>
<feature type="strand" evidence="7">
    <location>
        <begin position="785"/>
        <end position="790"/>
    </location>
</feature>
<accession>Q07806</accession>
<evidence type="ECO:0000250" key="1"/>
<evidence type="ECO:0000250" key="2">
    <source>
        <dbReference type="UniProtKB" id="P02918"/>
    </source>
</evidence>
<evidence type="ECO:0000250" key="3">
    <source>
        <dbReference type="UniProtKB" id="P02919"/>
    </source>
</evidence>
<evidence type="ECO:0000255" key="4"/>
<evidence type="ECO:0000256" key="5">
    <source>
        <dbReference type="SAM" id="MobiDB-lite"/>
    </source>
</evidence>
<evidence type="ECO:0000305" key="6"/>
<evidence type="ECO:0007829" key="7">
    <source>
        <dbReference type="PDB" id="4OON"/>
    </source>
</evidence>
<organism>
    <name type="scientific">Pseudomonas aeruginosa (strain ATCC 15692 / DSM 22644 / CIP 104116 / JCM 14847 / LMG 12228 / 1C / PRS 101 / PAO1)</name>
    <dbReference type="NCBI Taxonomy" id="208964"/>
    <lineage>
        <taxon>Bacteria</taxon>
        <taxon>Pseudomonadati</taxon>
        <taxon>Pseudomonadota</taxon>
        <taxon>Gammaproteobacteria</taxon>
        <taxon>Pseudomonadales</taxon>
        <taxon>Pseudomonadaceae</taxon>
        <taxon>Pseudomonas</taxon>
    </lineage>
</organism>
<proteinExistence type="evidence at protein level"/>
<name>PBPA_PSEAE</name>
<keyword id="KW-0002">3D-structure</keyword>
<keyword id="KW-0046">Antibiotic resistance</keyword>
<keyword id="KW-0121">Carboxypeptidase</keyword>
<keyword id="KW-0997">Cell inner membrane</keyword>
<keyword id="KW-1003">Cell membrane</keyword>
<keyword id="KW-0133">Cell shape</keyword>
<keyword id="KW-0961">Cell wall biogenesis/degradation</keyword>
<keyword id="KW-0328">Glycosyltransferase</keyword>
<keyword id="KW-0378">Hydrolase</keyword>
<keyword id="KW-0472">Membrane</keyword>
<keyword id="KW-0511">Multifunctional enzyme</keyword>
<keyword id="KW-0573">Peptidoglycan synthesis</keyword>
<keyword id="KW-0645">Protease</keyword>
<keyword id="KW-1185">Reference proteome</keyword>
<keyword id="KW-0735">Signal-anchor</keyword>
<keyword id="KW-0808">Transferase</keyword>
<keyword id="KW-0812">Transmembrane</keyword>
<keyword id="KW-1133">Transmembrane helix</keyword>
<dbReference type="EC" id="2.4.99.28" evidence="2"/>
<dbReference type="EC" id="3.4.16.4" evidence="2"/>
<dbReference type="EMBL" id="U73780">
    <property type="protein sequence ID" value="AAB39710.1"/>
    <property type="molecule type" value="Genomic_DNA"/>
</dbReference>
<dbReference type="EMBL" id="AE004091">
    <property type="protein sequence ID" value="AAG08430.1"/>
    <property type="molecule type" value="Genomic_DNA"/>
</dbReference>
<dbReference type="EMBL" id="L13867">
    <property type="protein sequence ID" value="AAC36826.1"/>
    <property type="molecule type" value="Unassigned_DNA"/>
</dbReference>
<dbReference type="PIR" id="F83016">
    <property type="entry name" value="F83016"/>
</dbReference>
<dbReference type="RefSeq" id="NP_253732.1">
    <property type="nucleotide sequence ID" value="NC_002516.2"/>
</dbReference>
<dbReference type="RefSeq" id="WP_003114576.1">
    <property type="nucleotide sequence ID" value="NZ_QZGE01000002.1"/>
</dbReference>
<dbReference type="PDB" id="4OON">
    <property type="method" value="X-ray"/>
    <property type="resolution" value="3.20 A"/>
    <property type="chains" value="A=36-822"/>
</dbReference>
<dbReference type="PDBsum" id="4OON"/>
<dbReference type="SMR" id="Q07806"/>
<dbReference type="FunCoup" id="Q07806">
    <property type="interactions" value="367"/>
</dbReference>
<dbReference type="STRING" id="208964.PA5045"/>
<dbReference type="BindingDB" id="Q07806"/>
<dbReference type="ChEMBL" id="CHEMBL3259512"/>
<dbReference type="DrugBank" id="DB14879">
    <property type="generic name" value="Cefiderocol"/>
</dbReference>
<dbReference type="DrugBank" id="DB01329">
    <property type="generic name" value="Cefoperazone"/>
</dbReference>
<dbReference type="DrugBank" id="DB00430">
    <property type="generic name" value="Cefpiramide"/>
</dbReference>
<dbReference type="DrugCentral" id="Q07806"/>
<dbReference type="CAZy" id="GT51">
    <property type="family name" value="Glycosyltransferase Family 51"/>
</dbReference>
<dbReference type="PaxDb" id="208964-PA5045"/>
<dbReference type="DNASU" id="881163"/>
<dbReference type="GeneID" id="881163"/>
<dbReference type="KEGG" id="pae:PA5045"/>
<dbReference type="PATRIC" id="fig|208964.12.peg.5289"/>
<dbReference type="PseudoCAP" id="PA5045"/>
<dbReference type="HOGENOM" id="CLU_006354_2_4_6"/>
<dbReference type="InParanoid" id="Q07806"/>
<dbReference type="OrthoDB" id="9766909at2"/>
<dbReference type="PhylomeDB" id="Q07806"/>
<dbReference type="BioCyc" id="PAER208964:G1FZ6-5161-MONOMER"/>
<dbReference type="UniPathway" id="UPA00219"/>
<dbReference type="EvolutionaryTrace" id="Q07806"/>
<dbReference type="PRO" id="PR:Q07806"/>
<dbReference type="Proteomes" id="UP000002438">
    <property type="component" value="Chromosome"/>
</dbReference>
<dbReference type="GO" id="GO:0030288">
    <property type="term" value="C:outer membrane-bounded periplasmic space"/>
    <property type="evidence" value="ECO:0000318"/>
    <property type="project" value="GO_Central"/>
</dbReference>
<dbReference type="GO" id="GO:0005886">
    <property type="term" value="C:plasma membrane"/>
    <property type="evidence" value="ECO:0007669"/>
    <property type="project" value="UniProtKB-SubCell"/>
</dbReference>
<dbReference type="GO" id="GO:0008658">
    <property type="term" value="F:penicillin binding"/>
    <property type="evidence" value="ECO:0000314"/>
    <property type="project" value="PseudoCAP"/>
</dbReference>
<dbReference type="GO" id="GO:0008955">
    <property type="term" value="F:peptidoglycan glycosyltransferase activity"/>
    <property type="evidence" value="ECO:0000318"/>
    <property type="project" value="GO_Central"/>
</dbReference>
<dbReference type="GO" id="GO:0009002">
    <property type="term" value="F:serine-type D-Ala-D-Ala carboxypeptidase activity"/>
    <property type="evidence" value="ECO:0007669"/>
    <property type="project" value="UniProtKB-EC"/>
</dbReference>
<dbReference type="GO" id="GO:0071555">
    <property type="term" value="P:cell wall organization"/>
    <property type="evidence" value="ECO:0007669"/>
    <property type="project" value="UniProtKB-KW"/>
</dbReference>
<dbReference type="GO" id="GO:0009252">
    <property type="term" value="P:peptidoglycan biosynthetic process"/>
    <property type="evidence" value="ECO:0000318"/>
    <property type="project" value="GO_Central"/>
</dbReference>
<dbReference type="GO" id="GO:0006508">
    <property type="term" value="P:proteolysis"/>
    <property type="evidence" value="ECO:0007669"/>
    <property type="project" value="UniProtKB-KW"/>
</dbReference>
<dbReference type="GO" id="GO:0008360">
    <property type="term" value="P:regulation of cell shape"/>
    <property type="evidence" value="ECO:0007669"/>
    <property type="project" value="UniProtKB-KW"/>
</dbReference>
<dbReference type="GO" id="GO:0046677">
    <property type="term" value="P:response to antibiotic"/>
    <property type="evidence" value="ECO:0007669"/>
    <property type="project" value="UniProtKB-KW"/>
</dbReference>
<dbReference type="FunFam" id="3.40.710.10:FF:000042">
    <property type="entry name" value="Penicillin-binding protein 1A"/>
    <property type="match status" value="1"/>
</dbReference>
<dbReference type="FunFam" id="1.10.3810.10:FF:000003">
    <property type="entry name" value="Penicillin-binding protein 1a"/>
    <property type="match status" value="1"/>
</dbReference>
<dbReference type="Gene3D" id="1.10.3810.10">
    <property type="entry name" value="Biosynthetic peptidoglycan transglycosylase-like"/>
    <property type="match status" value="1"/>
</dbReference>
<dbReference type="Gene3D" id="3.40.710.10">
    <property type="entry name" value="DD-peptidase/beta-lactamase superfamily"/>
    <property type="match status" value="3"/>
</dbReference>
<dbReference type="InterPro" id="IPR012338">
    <property type="entry name" value="Beta-lactam/transpept-like"/>
</dbReference>
<dbReference type="InterPro" id="IPR001264">
    <property type="entry name" value="Glyco_trans_51"/>
</dbReference>
<dbReference type="InterPro" id="IPR050396">
    <property type="entry name" value="Glycosyltr_51/Transpeptidase"/>
</dbReference>
<dbReference type="InterPro" id="IPR023346">
    <property type="entry name" value="Lysozyme-like_dom_sf"/>
</dbReference>
<dbReference type="InterPro" id="IPR036950">
    <property type="entry name" value="PBP_transglycosylase"/>
</dbReference>
<dbReference type="InterPro" id="IPR031376">
    <property type="entry name" value="PCB_OB"/>
</dbReference>
<dbReference type="InterPro" id="IPR001460">
    <property type="entry name" value="PCN-bd_Tpept"/>
</dbReference>
<dbReference type="NCBIfam" id="TIGR02074">
    <property type="entry name" value="PBP_1a_fam"/>
    <property type="match status" value="1"/>
</dbReference>
<dbReference type="PANTHER" id="PTHR32282">
    <property type="entry name" value="BINDING PROTEIN TRANSPEPTIDASE, PUTATIVE-RELATED"/>
    <property type="match status" value="1"/>
</dbReference>
<dbReference type="PANTHER" id="PTHR32282:SF27">
    <property type="entry name" value="PENICILLIN-BINDING PROTEIN 1A"/>
    <property type="match status" value="1"/>
</dbReference>
<dbReference type="Pfam" id="PF17092">
    <property type="entry name" value="PCB_OB"/>
    <property type="match status" value="1"/>
</dbReference>
<dbReference type="Pfam" id="PF00912">
    <property type="entry name" value="Transgly"/>
    <property type="match status" value="1"/>
</dbReference>
<dbReference type="Pfam" id="PF00905">
    <property type="entry name" value="Transpeptidase"/>
    <property type="match status" value="1"/>
</dbReference>
<dbReference type="SUPFAM" id="SSF56601">
    <property type="entry name" value="beta-lactamase/transpeptidase-like"/>
    <property type="match status" value="1"/>
</dbReference>
<dbReference type="SUPFAM" id="SSF53955">
    <property type="entry name" value="Lysozyme-like"/>
    <property type="match status" value="1"/>
</dbReference>